<comment type="function">
    <text evidence="1">Catalyzes the attachment of tyrosine to tRNA(Tyr) in a two-step reaction: tyrosine is first activated by ATP to form Tyr-AMP and then transferred to the acceptor end of tRNA(Tyr).</text>
</comment>
<comment type="catalytic activity">
    <reaction evidence="1">
        <text>tRNA(Tyr) + L-tyrosine + ATP = L-tyrosyl-tRNA(Tyr) + AMP + diphosphate + H(+)</text>
        <dbReference type="Rhea" id="RHEA:10220"/>
        <dbReference type="Rhea" id="RHEA-COMP:9706"/>
        <dbReference type="Rhea" id="RHEA-COMP:9707"/>
        <dbReference type="ChEBI" id="CHEBI:15378"/>
        <dbReference type="ChEBI" id="CHEBI:30616"/>
        <dbReference type="ChEBI" id="CHEBI:33019"/>
        <dbReference type="ChEBI" id="CHEBI:58315"/>
        <dbReference type="ChEBI" id="CHEBI:78442"/>
        <dbReference type="ChEBI" id="CHEBI:78536"/>
        <dbReference type="ChEBI" id="CHEBI:456215"/>
        <dbReference type="EC" id="6.1.1.1"/>
    </reaction>
</comment>
<comment type="subunit">
    <text evidence="1">Homodimer.</text>
</comment>
<comment type="subcellular location">
    <subcellularLocation>
        <location evidence="1">Cytoplasm</location>
    </subcellularLocation>
</comment>
<comment type="similarity">
    <text evidence="1">Belongs to the class-I aminoacyl-tRNA synthetase family. TyrS type 1 subfamily.</text>
</comment>
<accession>P57221</accession>
<feature type="chain" id="PRO_0000055646" description="Tyrosine--tRNA ligase">
    <location>
        <begin position="1"/>
        <end position="422"/>
    </location>
</feature>
<feature type="domain" description="S4 RNA-binding" evidence="1">
    <location>
        <begin position="357"/>
        <end position="414"/>
    </location>
</feature>
<feature type="short sequence motif" description="'HIGH' region">
    <location>
        <begin position="42"/>
        <end position="51"/>
    </location>
</feature>
<feature type="short sequence motif" description="'KMSKS' region">
    <location>
        <begin position="235"/>
        <end position="239"/>
    </location>
</feature>
<feature type="binding site" evidence="1">
    <location>
        <position position="37"/>
    </location>
    <ligand>
        <name>L-tyrosine</name>
        <dbReference type="ChEBI" id="CHEBI:58315"/>
    </ligand>
</feature>
<feature type="binding site" evidence="1">
    <location>
        <position position="175"/>
    </location>
    <ligand>
        <name>L-tyrosine</name>
        <dbReference type="ChEBI" id="CHEBI:58315"/>
    </ligand>
</feature>
<feature type="binding site" evidence="1">
    <location>
        <position position="179"/>
    </location>
    <ligand>
        <name>L-tyrosine</name>
        <dbReference type="ChEBI" id="CHEBI:58315"/>
    </ligand>
</feature>
<feature type="binding site" evidence="1">
    <location>
        <position position="238"/>
    </location>
    <ligand>
        <name>ATP</name>
        <dbReference type="ChEBI" id="CHEBI:30616"/>
    </ligand>
</feature>
<dbReference type="EC" id="6.1.1.1" evidence="1"/>
<dbReference type="EMBL" id="BA000003">
    <property type="protein sequence ID" value="BAB12839.1"/>
    <property type="molecule type" value="Genomic_DNA"/>
</dbReference>
<dbReference type="RefSeq" id="NP_239953.1">
    <property type="nucleotide sequence ID" value="NC_002528.1"/>
</dbReference>
<dbReference type="RefSeq" id="WP_010895958.1">
    <property type="nucleotide sequence ID" value="NC_002528.1"/>
</dbReference>
<dbReference type="SMR" id="P57221"/>
<dbReference type="STRING" id="563178.BUAP5A_119"/>
<dbReference type="EnsemblBacteria" id="BAB12839">
    <property type="protein sequence ID" value="BAB12839"/>
    <property type="gene ID" value="BAB12839"/>
</dbReference>
<dbReference type="KEGG" id="buc:BU121"/>
<dbReference type="PATRIC" id="fig|107806.10.peg.130"/>
<dbReference type="eggNOG" id="COG0162">
    <property type="taxonomic scope" value="Bacteria"/>
</dbReference>
<dbReference type="HOGENOM" id="CLU_024003_0_3_6"/>
<dbReference type="Proteomes" id="UP000001806">
    <property type="component" value="Chromosome"/>
</dbReference>
<dbReference type="GO" id="GO:0005829">
    <property type="term" value="C:cytosol"/>
    <property type="evidence" value="ECO:0007669"/>
    <property type="project" value="TreeGrafter"/>
</dbReference>
<dbReference type="GO" id="GO:0005524">
    <property type="term" value="F:ATP binding"/>
    <property type="evidence" value="ECO:0007669"/>
    <property type="project" value="UniProtKB-UniRule"/>
</dbReference>
<dbReference type="GO" id="GO:0003723">
    <property type="term" value="F:RNA binding"/>
    <property type="evidence" value="ECO:0007669"/>
    <property type="project" value="UniProtKB-KW"/>
</dbReference>
<dbReference type="GO" id="GO:0004831">
    <property type="term" value="F:tyrosine-tRNA ligase activity"/>
    <property type="evidence" value="ECO:0007669"/>
    <property type="project" value="UniProtKB-UniRule"/>
</dbReference>
<dbReference type="GO" id="GO:0006437">
    <property type="term" value="P:tyrosyl-tRNA aminoacylation"/>
    <property type="evidence" value="ECO:0007669"/>
    <property type="project" value="UniProtKB-UniRule"/>
</dbReference>
<dbReference type="CDD" id="cd00805">
    <property type="entry name" value="TyrRS_core"/>
    <property type="match status" value="1"/>
</dbReference>
<dbReference type="FunFam" id="1.10.240.10:FF:000001">
    <property type="entry name" value="Tyrosine--tRNA ligase"/>
    <property type="match status" value="1"/>
</dbReference>
<dbReference type="FunFam" id="3.40.50.620:FF:000008">
    <property type="entry name" value="Tyrosine--tRNA ligase"/>
    <property type="match status" value="1"/>
</dbReference>
<dbReference type="Gene3D" id="3.40.50.620">
    <property type="entry name" value="HUPs"/>
    <property type="match status" value="1"/>
</dbReference>
<dbReference type="Gene3D" id="3.10.290.10">
    <property type="entry name" value="RNA-binding S4 domain"/>
    <property type="match status" value="1"/>
</dbReference>
<dbReference type="Gene3D" id="1.10.240.10">
    <property type="entry name" value="Tyrosyl-Transfer RNA Synthetase"/>
    <property type="match status" value="1"/>
</dbReference>
<dbReference type="HAMAP" id="MF_02006">
    <property type="entry name" value="Tyr_tRNA_synth_type1"/>
    <property type="match status" value="1"/>
</dbReference>
<dbReference type="InterPro" id="IPR002305">
    <property type="entry name" value="aa-tRNA-synth_Ic"/>
</dbReference>
<dbReference type="InterPro" id="IPR014729">
    <property type="entry name" value="Rossmann-like_a/b/a_fold"/>
</dbReference>
<dbReference type="InterPro" id="IPR036986">
    <property type="entry name" value="S4_RNA-bd_sf"/>
</dbReference>
<dbReference type="InterPro" id="IPR054608">
    <property type="entry name" value="SYY-like_C"/>
</dbReference>
<dbReference type="InterPro" id="IPR002307">
    <property type="entry name" value="Tyr-tRNA-ligase"/>
</dbReference>
<dbReference type="InterPro" id="IPR024088">
    <property type="entry name" value="Tyr-tRNA-ligase_bac-type"/>
</dbReference>
<dbReference type="InterPro" id="IPR024107">
    <property type="entry name" value="Tyr-tRNA-ligase_bac_1"/>
</dbReference>
<dbReference type="NCBIfam" id="TIGR00234">
    <property type="entry name" value="tyrS"/>
    <property type="match status" value="1"/>
</dbReference>
<dbReference type="PANTHER" id="PTHR11766:SF0">
    <property type="entry name" value="TYROSINE--TRNA LIGASE, MITOCHONDRIAL"/>
    <property type="match status" value="1"/>
</dbReference>
<dbReference type="PANTHER" id="PTHR11766">
    <property type="entry name" value="TYROSYL-TRNA SYNTHETASE"/>
    <property type="match status" value="1"/>
</dbReference>
<dbReference type="Pfam" id="PF22421">
    <property type="entry name" value="SYY_C-terminal"/>
    <property type="match status" value="1"/>
</dbReference>
<dbReference type="Pfam" id="PF00579">
    <property type="entry name" value="tRNA-synt_1b"/>
    <property type="match status" value="1"/>
</dbReference>
<dbReference type="PRINTS" id="PR01040">
    <property type="entry name" value="TRNASYNTHTYR"/>
</dbReference>
<dbReference type="SUPFAM" id="SSF55174">
    <property type="entry name" value="Alpha-L RNA-binding motif"/>
    <property type="match status" value="1"/>
</dbReference>
<dbReference type="SUPFAM" id="SSF52374">
    <property type="entry name" value="Nucleotidylyl transferase"/>
    <property type="match status" value="1"/>
</dbReference>
<dbReference type="PROSITE" id="PS50889">
    <property type="entry name" value="S4"/>
    <property type="match status" value="1"/>
</dbReference>
<gene>
    <name evidence="1" type="primary">tyrS</name>
    <name type="ordered locus">BU121</name>
</gene>
<organism>
    <name type="scientific">Buchnera aphidicola subsp. Acyrthosiphon pisum (strain APS)</name>
    <name type="common">Acyrthosiphon pisum symbiotic bacterium</name>
    <dbReference type="NCBI Taxonomy" id="107806"/>
    <lineage>
        <taxon>Bacteria</taxon>
        <taxon>Pseudomonadati</taxon>
        <taxon>Pseudomonadota</taxon>
        <taxon>Gammaproteobacteria</taxon>
        <taxon>Enterobacterales</taxon>
        <taxon>Erwiniaceae</taxon>
        <taxon>Buchnera</taxon>
    </lineage>
</organism>
<sequence length="422" mass="48675">MSEFNFISRLHNRGLISHITNEDNLSKLIENKSISLYCGFDPTEESLHIGHLLPLIMLKRFQIAGHRPIILIGGATSLIGDPSFKEKERVFNSNYNVNIWTEKITKQISCFLDFNCGKNSAVLLNNNTWFKQINILSFLRDVGKYFSVNTMINRAAVKQRITRPDQGISFTEFSYNLLQAYDFFILNQQYQADLQIGGADQWGNISSGMHLIHRKTKRVVYGLTVPLLIQSNGIKFGKTESGTIWLDSNKTSPYKFYQFWMNIEDANVYYFLKLFTFIKVSEINKLEKNKNIKNQIINDKSLLAKHITQLVHGKEKLLAAERITKFLFLKNTTHIEESDLQQLKQDGIPFIEVSNVKDLQEALVLTSLAQSRTQAKNMIISNSISINTEKIRKNHIFHEKDKLFGKFTLLSRGKKQHSLLCW</sequence>
<reference key="1">
    <citation type="journal article" date="2000" name="Nature">
        <title>Genome sequence of the endocellular bacterial symbiont of aphids Buchnera sp. APS.</title>
        <authorList>
            <person name="Shigenobu S."/>
            <person name="Watanabe H."/>
            <person name="Hattori M."/>
            <person name="Sakaki Y."/>
            <person name="Ishikawa H."/>
        </authorList>
    </citation>
    <scope>NUCLEOTIDE SEQUENCE [LARGE SCALE GENOMIC DNA]</scope>
    <source>
        <strain>APS</strain>
    </source>
</reference>
<keyword id="KW-0030">Aminoacyl-tRNA synthetase</keyword>
<keyword id="KW-0067">ATP-binding</keyword>
<keyword id="KW-0963">Cytoplasm</keyword>
<keyword id="KW-0436">Ligase</keyword>
<keyword id="KW-0547">Nucleotide-binding</keyword>
<keyword id="KW-0648">Protein biosynthesis</keyword>
<keyword id="KW-1185">Reference proteome</keyword>
<keyword id="KW-0694">RNA-binding</keyword>
<evidence type="ECO:0000255" key="1">
    <source>
        <dbReference type="HAMAP-Rule" id="MF_02006"/>
    </source>
</evidence>
<name>SYY_BUCAI</name>
<proteinExistence type="inferred from homology"/>
<protein>
    <recommendedName>
        <fullName evidence="1">Tyrosine--tRNA ligase</fullName>
        <ecNumber evidence="1">6.1.1.1</ecNumber>
    </recommendedName>
    <alternativeName>
        <fullName evidence="1">Tyrosyl-tRNA synthetase</fullName>
        <shortName evidence="1">TyrRS</shortName>
    </alternativeName>
</protein>